<proteinExistence type="inferred from homology"/>
<evidence type="ECO:0000255" key="1">
    <source>
        <dbReference type="HAMAP-Rule" id="MF_00022"/>
    </source>
</evidence>
<comment type="function">
    <text evidence="1">Catalyzes the attachment of glutamate to tRNA(Glu) in a two-step reaction: glutamate is first activated by ATP to form Glu-AMP and then transferred to the acceptor end of tRNA(Glu).</text>
</comment>
<comment type="catalytic activity">
    <reaction evidence="1">
        <text>tRNA(Glu) + L-glutamate + ATP = L-glutamyl-tRNA(Glu) + AMP + diphosphate</text>
        <dbReference type="Rhea" id="RHEA:23540"/>
        <dbReference type="Rhea" id="RHEA-COMP:9663"/>
        <dbReference type="Rhea" id="RHEA-COMP:9680"/>
        <dbReference type="ChEBI" id="CHEBI:29985"/>
        <dbReference type="ChEBI" id="CHEBI:30616"/>
        <dbReference type="ChEBI" id="CHEBI:33019"/>
        <dbReference type="ChEBI" id="CHEBI:78442"/>
        <dbReference type="ChEBI" id="CHEBI:78520"/>
        <dbReference type="ChEBI" id="CHEBI:456215"/>
        <dbReference type="EC" id="6.1.1.17"/>
    </reaction>
</comment>
<comment type="cofactor">
    <cofactor evidence="1">
        <name>Zn(2+)</name>
        <dbReference type="ChEBI" id="CHEBI:29105"/>
    </cofactor>
    <text evidence="1">Binds 1 zinc ion per subunit.</text>
</comment>
<comment type="subunit">
    <text evidence="1">Monomer.</text>
</comment>
<comment type="subcellular location">
    <subcellularLocation>
        <location evidence="1">Cytoplasm</location>
    </subcellularLocation>
</comment>
<comment type="similarity">
    <text evidence="1">Belongs to the class-I aminoacyl-tRNA synthetase family. Glutamate--tRNA ligase type 1 subfamily.</text>
</comment>
<accession>P43818</accession>
<feature type="chain" id="PRO_0000119572" description="Glutamate--tRNA ligase">
    <location>
        <begin position="1"/>
        <end position="480"/>
    </location>
</feature>
<feature type="short sequence motif" description="'HIGH' region" evidence="1">
    <location>
        <begin position="21"/>
        <end position="31"/>
    </location>
</feature>
<feature type="short sequence motif" description="'KMSKS' region" evidence="1">
    <location>
        <begin position="248"/>
        <end position="252"/>
    </location>
</feature>
<feature type="binding site" evidence="1">
    <location>
        <position position="110"/>
    </location>
    <ligand>
        <name>Zn(2+)</name>
        <dbReference type="ChEBI" id="CHEBI:29105"/>
    </ligand>
</feature>
<feature type="binding site" evidence="1">
    <location>
        <position position="112"/>
    </location>
    <ligand>
        <name>Zn(2+)</name>
        <dbReference type="ChEBI" id="CHEBI:29105"/>
    </ligand>
</feature>
<feature type="binding site" evidence="1">
    <location>
        <position position="137"/>
    </location>
    <ligand>
        <name>Zn(2+)</name>
        <dbReference type="ChEBI" id="CHEBI:29105"/>
    </ligand>
</feature>
<feature type="binding site" evidence="1">
    <location>
        <position position="139"/>
    </location>
    <ligand>
        <name>Zn(2+)</name>
        <dbReference type="ChEBI" id="CHEBI:29105"/>
    </ligand>
</feature>
<feature type="binding site" evidence="1">
    <location>
        <position position="251"/>
    </location>
    <ligand>
        <name>ATP</name>
        <dbReference type="ChEBI" id="CHEBI:30616"/>
    </ligand>
</feature>
<gene>
    <name evidence="1" type="primary">gltX</name>
    <name type="ordered locus">HI_0274</name>
</gene>
<reference key="1">
    <citation type="journal article" date="1995" name="Science">
        <title>Whole-genome random sequencing and assembly of Haemophilus influenzae Rd.</title>
        <authorList>
            <person name="Fleischmann R.D."/>
            <person name="Adams M.D."/>
            <person name="White O."/>
            <person name="Clayton R.A."/>
            <person name="Kirkness E.F."/>
            <person name="Kerlavage A.R."/>
            <person name="Bult C.J."/>
            <person name="Tomb J.-F."/>
            <person name="Dougherty B.A."/>
            <person name="Merrick J.M."/>
            <person name="McKenney K."/>
            <person name="Sutton G.G."/>
            <person name="FitzHugh W."/>
            <person name="Fields C.A."/>
            <person name="Gocayne J.D."/>
            <person name="Scott J.D."/>
            <person name="Shirley R."/>
            <person name="Liu L.-I."/>
            <person name="Glodek A."/>
            <person name="Kelley J.M."/>
            <person name="Weidman J.F."/>
            <person name="Phillips C.A."/>
            <person name="Spriggs T."/>
            <person name="Hedblom E."/>
            <person name="Cotton M.D."/>
            <person name="Utterback T.R."/>
            <person name="Hanna M.C."/>
            <person name="Nguyen D.T."/>
            <person name="Saudek D.M."/>
            <person name="Brandon R.C."/>
            <person name="Fine L.D."/>
            <person name="Fritchman J.L."/>
            <person name="Fuhrmann J.L."/>
            <person name="Geoghagen N.S.M."/>
            <person name="Gnehm C.L."/>
            <person name="McDonald L.A."/>
            <person name="Small K.V."/>
            <person name="Fraser C.M."/>
            <person name="Smith H.O."/>
            <person name="Venter J.C."/>
        </authorList>
    </citation>
    <scope>NUCLEOTIDE SEQUENCE [LARGE SCALE GENOMIC DNA]</scope>
    <source>
        <strain>ATCC 51907 / DSM 11121 / KW20 / Rd</strain>
    </source>
</reference>
<sequence>MKLDAPFNLDPNVKVRTRFAPSPTGYLHVGGARTALYSWLYAKHNNGEFVLRIEDTDLERSTPEATAAIIEGMEWLNLPWEHGPYYQTKRFDRYNQVIDEMIEQGLAYRCYCTKEHLEELRHTQEQNKEKPRYDRHCLHDHNHSPDEPHVVRFKNPTEGSVVFDDAVRGRIEISNSELDDLIIRRTDGSPTYNFCVVVDDWDMGITHVVRGEDHINNTPRQINILKAIGAPIPTYAHVSMINGDDGQKLSKRHGAVSVMQYRDDGYLPEALINYLVRLGWGHGDQEIFSREEMINYFELDHVSKSASAFNTEKLQWLNQHYIRELPPEYVAKHLEWHYKDQGIDTSNGPALTEIVTMLAERCKTLKEMARSSRYFFEEFETFDEAAAKKHFKGNAAEALAKVKEKLTALSSWDLHSIHEAIEQTAAELEVGMGKVGMPLRVAVTGSGQSPSMDVTLVGIGRDRVLARIQRAIDFIHAQNA</sequence>
<name>SYE_HAEIN</name>
<dbReference type="EC" id="6.1.1.17" evidence="1"/>
<dbReference type="EMBL" id="L42023">
    <property type="protein sequence ID" value="AAC21940.1"/>
    <property type="molecule type" value="Genomic_DNA"/>
</dbReference>
<dbReference type="PIR" id="B64059">
    <property type="entry name" value="B64059"/>
</dbReference>
<dbReference type="RefSeq" id="NP_438443.1">
    <property type="nucleotide sequence ID" value="NC_000907.1"/>
</dbReference>
<dbReference type="SMR" id="P43818"/>
<dbReference type="STRING" id="71421.HI_0274"/>
<dbReference type="EnsemblBacteria" id="AAC21940">
    <property type="protein sequence ID" value="AAC21940"/>
    <property type="gene ID" value="HI_0274"/>
</dbReference>
<dbReference type="KEGG" id="hin:HI_0274"/>
<dbReference type="PATRIC" id="fig|71421.8.peg.289"/>
<dbReference type="eggNOG" id="COG0008">
    <property type="taxonomic scope" value="Bacteria"/>
</dbReference>
<dbReference type="HOGENOM" id="CLU_015768_6_0_6"/>
<dbReference type="OrthoDB" id="9807503at2"/>
<dbReference type="PhylomeDB" id="P43818"/>
<dbReference type="BioCyc" id="HINF71421:G1GJ1-290-MONOMER"/>
<dbReference type="Proteomes" id="UP000000579">
    <property type="component" value="Chromosome"/>
</dbReference>
<dbReference type="GO" id="GO:0005829">
    <property type="term" value="C:cytosol"/>
    <property type="evidence" value="ECO:0000318"/>
    <property type="project" value="GO_Central"/>
</dbReference>
<dbReference type="GO" id="GO:0005524">
    <property type="term" value="F:ATP binding"/>
    <property type="evidence" value="ECO:0007669"/>
    <property type="project" value="UniProtKB-UniRule"/>
</dbReference>
<dbReference type="GO" id="GO:0004818">
    <property type="term" value="F:glutamate-tRNA ligase activity"/>
    <property type="evidence" value="ECO:0000318"/>
    <property type="project" value="GO_Central"/>
</dbReference>
<dbReference type="GO" id="GO:0000049">
    <property type="term" value="F:tRNA binding"/>
    <property type="evidence" value="ECO:0007669"/>
    <property type="project" value="InterPro"/>
</dbReference>
<dbReference type="GO" id="GO:0008270">
    <property type="term" value="F:zinc ion binding"/>
    <property type="evidence" value="ECO:0007669"/>
    <property type="project" value="InterPro"/>
</dbReference>
<dbReference type="GO" id="GO:0006424">
    <property type="term" value="P:glutamyl-tRNA aminoacylation"/>
    <property type="evidence" value="ECO:0000318"/>
    <property type="project" value="GO_Central"/>
</dbReference>
<dbReference type="CDD" id="cd00808">
    <property type="entry name" value="GluRS_core"/>
    <property type="match status" value="1"/>
</dbReference>
<dbReference type="FunFam" id="1.10.10.350:FF:000015">
    <property type="entry name" value="Glutamate--tRNA ligase"/>
    <property type="match status" value="1"/>
</dbReference>
<dbReference type="FunFam" id="3.40.50.620:FF:000007">
    <property type="entry name" value="Glutamate--tRNA ligase"/>
    <property type="match status" value="1"/>
</dbReference>
<dbReference type="Gene3D" id="1.10.10.350">
    <property type="match status" value="1"/>
</dbReference>
<dbReference type="Gene3D" id="3.40.50.620">
    <property type="entry name" value="HUPs"/>
    <property type="match status" value="1"/>
</dbReference>
<dbReference type="HAMAP" id="MF_00022">
    <property type="entry name" value="Glu_tRNA_synth_type1"/>
    <property type="match status" value="1"/>
</dbReference>
<dbReference type="InterPro" id="IPR045462">
    <property type="entry name" value="aa-tRNA-synth_I_cd-bd"/>
</dbReference>
<dbReference type="InterPro" id="IPR020751">
    <property type="entry name" value="aa-tRNA-synth_I_codon-bd_sub2"/>
</dbReference>
<dbReference type="InterPro" id="IPR001412">
    <property type="entry name" value="aa-tRNA-synth_I_CS"/>
</dbReference>
<dbReference type="InterPro" id="IPR008925">
    <property type="entry name" value="aa_tRNA-synth_I_cd-bd_sf"/>
</dbReference>
<dbReference type="InterPro" id="IPR004527">
    <property type="entry name" value="Glu-tRNA-ligase_bac/mito"/>
</dbReference>
<dbReference type="InterPro" id="IPR000924">
    <property type="entry name" value="Glu/Gln-tRNA-synth"/>
</dbReference>
<dbReference type="InterPro" id="IPR020058">
    <property type="entry name" value="Glu/Gln-tRNA-synth_Ib_cat-dom"/>
</dbReference>
<dbReference type="InterPro" id="IPR049940">
    <property type="entry name" value="GluQ/Sye"/>
</dbReference>
<dbReference type="InterPro" id="IPR033910">
    <property type="entry name" value="GluRS_core"/>
</dbReference>
<dbReference type="InterPro" id="IPR014729">
    <property type="entry name" value="Rossmann-like_a/b/a_fold"/>
</dbReference>
<dbReference type="NCBIfam" id="TIGR00464">
    <property type="entry name" value="gltX_bact"/>
    <property type="match status" value="1"/>
</dbReference>
<dbReference type="PANTHER" id="PTHR43311">
    <property type="entry name" value="GLUTAMATE--TRNA LIGASE"/>
    <property type="match status" value="1"/>
</dbReference>
<dbReference type="PANTHER" id="PTHR43311:SF2">
    <property type="entry name" value="GLUTAMATE--TRNA LIGASE, MITOCHONDRIAL-RELATED"/>
    <property type="match status" value="1"/>
</dbReference>
<dbReference type="Pfam" id="PF19269">
    <property type="entry name" value="Anticodon_2"/>
    <property type="match status" value="1"/>
</dbReference>
<dbReference type="Pfam" id="PF00749">
    <property type="entry name" value="tRNA-synt_1c"/>
    <property type="match status" value="1"/>
</dbReference>
<dbReference type="PRINTS" id="PR00987">
    <property type="entry name" value="TRNASYNTHGLU"/>
</dbReference>
<dbReference type="SUPFAM" id="SSF48163">
    <property type="entry name" value="An anticodon-binding domain of class I aminoacyl-tRNA synthetases"/>
    <property type="match status" value="1"/>
</dbReference>
<dbReference type="SUPFAM" id="SSF52374">
    <property type="entry name" value="Nucleotidylyl transferase"/>
    <property type="match status" value="1"/>
</dbReference>
<dbReference type="PROSITE" id="PS00178">
    <property type="entry name" value="AA_TRNA_LIGASE_I"/>
    <property type="match status" value="1"/>
</dbReference>
<organism>
    <name type="scientific">Haemophilus influenzae (strain ATCC 51907 / DSM 11121 / KW20 / Rd)</name>
    <dbReference type="NCBI Taxonomy" id="71421"/>
    <lineage>
        <taxon>Bacteria</taxon>
        <taxon>Pseudomonadati</taxon>
        <taxon>Pseudomonadota</taxon>
        <taxon>Gammaproteobacteria</taxon>
        <taxon>Pasteurellales</taxon>
        <taxon>Pasteurellaceae</taxon>
        <taxon>Haemophilus</taxon>
    </lineage>
</organism>
<protein>
    <recommendedName>
        <fullName evidence="1">Glutamate--tRNA ligase</fullName>
        <ecNumber evidence="1">6.1.1.17</ecNumber>
    </recommendedName>
    <alternativeName>
        <fullName evidence="1">Glutamyl-tRNA synthetase</fullName>
        <shortName evidence="1">GluRS</shortName>
    </alternativeName>
</protein>
<keyword id="KW-0030">Aminoacyl-tRNA synthetase</keyword>
<keyword id="KW-0067">ATP-binding</keyword>
<keyword id="KW-0963">Cytoplasm</keyword>
<keyword id="KW-0436">Ligase</keyword>
<keyword id="KW-0479">Metal-binding</keyword>
<keyword id="KW-0547">Nucleotide-binding</keyword>
<keyword id="KW-0648">Protein biosynthesis</keyword>
<keyword id="KW-1185">Reference proteome</keyword>
<keyword id="KW-0862">Zinc</keyword>